<name>PGDA3_BACCR</name>
<dbReference type="EC" id="3.5.1.104" evidence="3"/>
<dbReference type="EMBL" id="AE016877">
    <property type="protein sequence ID" value="AAP10549.1"/>
    <property type="molecule type" value="Genomic_DNA"/>
</dbReference>
<dbReference type="RefSeq" id="NP_833348.1">
    <property type="nucleotide sequence ID" value="NC_004722.1"/>
</dbReference>
<dbReference type="SMR" id="Q81AF4"/>
<dbReference type="STRING" id="226900.BC_3618"/>
<dbReference type="KEGG" id="bce:BC3618"/>
<dbReference type="PATRIC" id="fig|226900.8.peg.3716"/>
<dbReference type="HOGENOM" id="CLU_021264_0_1_9"/>
<dbReference type="BRENDA" id="3.5.1.104">
    <property type="organism ID" value="648"/>
</dbReference>
<dbReference type="SABIO-RK" id="Q81AF4"/>
<dbReference type="Proteomes" id="UP000001417">
    <property type="component" value="Chromosome"/>
</dbReference>
<dbReference type="GO" id="GO:0016810">
    <property type="term" value="F:hydrolase activity, acting on carbon-nitrogen (but not peptide) bonds"/>
    <property type="evidence" value="ECO:0007669"/>
    <property type="project" value="InterPro"/>
</dbReference>
<dbReference type="GO" id="GO:0046872">
    <property type="term" value="F:metal ion binding"/>
    <property type="evidence" value="ECO:0007669"/>
    <property type="project" value="UniProtKB-KW"/>
</dbReference>
<dbReference type="GO" id="GO:0005975">
    <property type="term" value="P:carbohydrate metabolic process"/>
    <property type="evidence" value="ECO:0007669"/>
    <property type="project" value="InterPro"/>
</dbReference>
<dbReference type="CDD" id="cd10917">
    <property type="entry name" value="CE4_NodB_like_6s_7s"/>
    <property type="match status" value="1"/>
</dbReference>
<dbReference type="Gene3D" id="3.20.20.370">
    <property type="entry name" value="Glycoside hydrolase/deacetylase"/>
    <property type="match status" value="1"/>
</dbReference>
<dbReference type="InterPro" id="IPR011330">
    <property type="entry name" value="Glyco_hydro/deAcase_b/a-brl"/>
</dbReference>
<dbReference type="InterPro" id="IPR002509">
    <property type="entry name" value="NODB_dom"/>
</dbReference>
<dbReference type="InterPro" id="IPR014132">
    <property type="entry name" value="PdaB-like"/>
</dbReference>
<dbReference type="InterPro" id="IPR050248">
    <property type="entry name" value="Polysacc_deacetylase_ArnD"/>
</dbReference>
<dbReference type="NCBIfam" id="TIGR02764">
    <property type="entry name" value="spore_ybaN_pdaB"/>
    <property type="match status" value="1"/>
</dbReference>
<dbReference type="PANTHER" id="PTHR10587:SF133">
    <property type="entry name" value="CHITIN DEACETYLASE 1-RELATED"/>
    <property type="match status" value="1"/>
</dbReference>
<dbReference type="PANTHER" id="PTHR10587">
    <property type="entry name" value="GLYCOSYL TRANSFERASE-RELATED"/>
    <property type="match status" value="1"/>
</dbReference>
<dbReference type="Pfam" id="PF01522">
    <property type="entry name" value="Polysacc_deac_1"/>
    <property type="match status" value="1"/>
</dbReference>
<dbReference type="SUPFAM" id="SSF88713">
    <property type="entry name" value="Glycoside hydrolase/deacetylase"/>
    <property type="match status" value="1"/>
</dbReference>
<dbReference type="PROSITE" id="PS51677">
    <property type="entry name" value="NODB"/>
    <property type="match status" value="1"/>
</dbReference>
<accession>Q81AF4</accession>
<gene>
    <name evidence="6" type="ordered locus">BC_3618</name>
</gene>
<keyword id="KW-0378">Hydrolase</keyword>
<keyword id="KW-0479">Metal-binding</keyword>
<keyword id="KW-1185">Reference proteome</keyword>
<keyword id="KW-0862">Zinc</keyword>
<proteinExistence type="evidence at protein level"/>
<organism>
    <name type="scientific">Bacillus cereus (strain ATCC 14579 / DSM 31 / CCUG 7414 / JCM 2152 / NBRC 15305 / NCIMB 9373 / NCTC 2599 / NRRL B-3711)</name>
    <dbReference type="NCBI Taxonomy" id="226900"/>
    <lineage>
        <taxon>Bacteria</taxon>
        <taxon>Bacillati</taxon>
        <taxon>Bacillota</taxon>
        <taxon>Bacilli</taxon>
        <taxon>Bacillales</taxon>
        <taxon>Bacillaceae</taxon>
        <taxon>Bacillus</taxon>
        <taxon>Bacillus cereus group</taxon>
    </lineage>
</organism>
<comment type="function">
    <text evidence="3">Catalyzes the deacetylation of N-acetylglucosamine (GlcNAc) residues in peptidoglycan. Also acts on soluble chitin substrates and N-acetylchitooligomers. Acts on cell wall peptidoglycan from the Gram-positive bacteria B.cereus and B.subtilis and the Gram-negative bacterium H.pylori. Not active on acetylated xylan.</text>
</comment>
<comment type="catalytic activity">
    <reaction evidence="3">
        <text>peptidoglycan-N-acetyl-D-glucosamine + H2O = peptidoglycan-D-glucosamine + acetate.</text>
        <dbReference type="EC" id="3.5.1.104"/>
    </reaction>
</comment>
<comment type="cofactor">
    <cofactor evidence="1">
        <name>Zn(2+)</name>
        <dbReference type="ChEBI" id="CHEBI:29105"/>
    </cofactor>
</comment>
<comment type="activity regulation">
    <text evidence="3">Inhibited by CuCl(2) and ZnCl(2).</text>
</comment>
<comment type="biophysicochemical properties">
    <kinetics>
        <KM evidence="3">3.9 mM for GlcNAc(2)</KM>
        <KM evidence="3">2.2 mM for GlcNAc(3)</KM>
        <KM evidence="3">1.5 mM for GlcNAc(4)</KM>
        <KM evidence="3">0.5 mM for GlcNAc(5)</KM>
        <KM evidence="3">0.45 mM for GlcNAc(6)</KM>
        <Vmax evidence="3">8.7 umol/min/mg enzyme with GlcNAc(2) as substrate</Vmax>
        <Vmax evidence="3">50.0 umol/min/mg enzyme with GlcNAc(3) as substrate</Vmax>
        <Vmax evidence="3">97.3 umol/min/mg enzyme with GlcNAc(4) as substrate</Vmax>
        <Vmax evidence="3">24.2 umol/min/mg enzyme with GlcNAc(5) as substrate</Vmax>
        <Vmax evidence="3">25.0 umol/min/mg enzyme with GlcNAc(6) as substrate</Vmax>
    </kinetics>
    <phDependence>
        <text evidence="3">Optimum pH is 8.0.</text>
    </phDependence>
    <temperatureDependence>
        <text evidence="3">Optimum temperature is 37 degrees Celsius.</text>
    </temperatureDependence>
</comment>
<comment type="similarity">
    <text evidence="5">Belongs to the polysaccharide deacetylase family.</text>
</comment>
<evidence type="ECO:0000250" key="1">
    <source>
        <dbReference type="UniProtKB" id="Q81EJ6"/>
    </source>
</evidence>
<evidence type="ECO:0000255" key="2">
    <source>
        <dbReference type="PROSITE-ProRule" id="PRU01014"/>
    </source>
</evidence>
<evidence type="ECO:0000269" key="3">
    <source>
    </source>
</evidence>
<evidence type="ECO:0000303" key="4">
    <source>
    </source>
</evidence>
<evidence type="ECO:0000305" key="5"/>
<evidence type="ECO:0000312" key="6">
    <source>
        <dbReference type="EMBL" id="AAP10549.1"/>
    </source>
</evidence>
<reference key="1">
    <citation type="journal article" date="2003" name="Nature">
        <title>Genome sequence of Bacillus cereus and comparative analysis with Bacillus anthracis.</title>
        <authorList>
            <person name="Ivanova N."/>
            <person name="Sorokin A."/>
            <person name="Anderson I."/>
            <person name="Galleron N."/>
            <person name="Candelon B."/>
            <person name="Kapatral V."/>
            <person name="Bhattacharyya A."/>
            <person name="Reznik G."/>
            <person name="Mikhailova N."/>
            <person name="Lapidus A."/>
            <person name="Chu L."/>
            <person name="Mazur M."/>
            <person name="Goltsman E."/>
            <person name="Larsen N."/>
            <person name="D'Souza M."/>
            <person name="Walunas T."/>
            <person name="Grechkin Y."/>
            <person name="Pusch G."/>
            <person name="Haselkorn R."/>
            <person name="Fonstein M."/>
            <person name="Ehrlich S.D."/>
            <person name="Overbeek R."/>
            <person name="Kyrpides N.C."/>
        </authorList>
    </citation>
    <scope>NUCLEOTIDE SEQUENCE [LARGE SCALE GENOMIC DNA]</scope>
    <source>
        <strain>ATCC 14579 / DSM 31 / CCUG 7414 / JCM 2152 / NBRC 15305 / NCIMB 9373 / NCTC 2599 / NRRL B-3711</strain>
    </source>
</reference>
<reference key="2">
    <citation type="journal article" date="2005" name="J. Biol. Chem.">
        <title>Peptidoglycan N-acetylglucosamine deacetylases from Bacillus cereus, highly conserved proteins in Bacillus anthracis.</title>
        <authorList>
            <person name="Psylinakis E."/>
            <person name="Boneca I.G."/>
            <person name="Mavromatis K."/>
            <person name="Deli A."/>
            <person name="Hayhurst E."/>
            <person name="Foster S.J."/>
            <person name="Vaarum K.M."/>
            <person name="Bouriotis V."/>
        </authorList>
    </citation>
    <scope>FUNCTION</scope>
    <scope>CATALYTIC ACTIVITY</scope>
    <scope>ACTIVITY REGULATION</scope>
    <scope>BIOPHYSICOCHEMICAL PROPERTIES</scope>
    <source>
        <strain>ATCC 14579 / DSM 31 / CCUG 7414 / JCM 2152 / NBRC 15305 / NCIMB 9373 / NCTC 2599 / NRRL B-3711</strain>
    </source>
</reference>
<sequence>MLLRKELEPTGYVTWEVPNNEKIIAITFDDGPDPTYTPQVLDLLRQYKAEATFFMIGFRVQRNPYLVKQVLKEGHEIGNHTMNHLYASNSSDEKLENDILDGKKFFEKWVKEPLLFRPPGGYINDAVFKTAKEAGYQTVLWSWHQDPRDWANPGVESIVNHVVKNAKSGDIVLLHDGGNDRSQTVAALAKILPELKKQGYRFVTVSELLRYKH</sequence>
<feature type="chain" id="PRO_0000447694" description="Peptidoglycan-N-acetylglucosamine deacetylase BC_3618">
    <location>
        <begin position="1"/>
        <end position="213"/>
    </location>
</feature>
<feature type="domain" description="NodB homology" evidence="2">
    <location>
        <begin position="22"/>
        <end position="203"/>
    </location>
</feature>
<feature type="active site" description="Proton acceptor" evidence="2">
    <location>
        <position position="29"/>
    </location>
</feature>
<feature type="active site" description="Proton donor" evidence="2">
    <location>
        <position position="175"/>
    </location>
</feature>
<feature type="binding site" evidence="1">
    <location>
        <position position="30"/>
    </location>
    <ligand>
        <name>Zn(2+)</name>
        <dbReference type="ChEBI" id="CHEBI:29105"/>
    </ligand>
</feature>
<feature type="binding site" evidence="1">
    <location>
        <position position="80"/>
    </location>
    <ligand>
        <name>Zn(2+)</name>
        <dbReference type="ChEBI" id="CHEBI:29105"/>
    </ligand>
</feature>
<feature type="binding site" evidence="1">
    <location>
        <position position="84"/>
    </location>
    <ligand>
        <name>Zn(2+)</name>
        <dbReference type="ChEBI" id="CHEBI:29105"/>
    </ligand>
</feature>
<protein>
    <recommendedName>
        <fullName evidence="4">Peptidoglycan-N-acetylglucosamine deacetylase BC_3618</fullName>
        <shortName evidence="4">Peptidoglycan GlcNAc deacetylase</shortName>
        <ecNumber evidence="3">3.5.1.104</ecNumber>
    </recommendedName>
</protein>